<protein>
    <recommendedName>
        <fullName evidence="1">RNA-binding protein Hfq</fullName>
    </recommendedName>
</protein>
<proteinExistence type="inferred from homology"/>
<keyword id="KW-1185">Reference proteome</keyword>
<keyword id="KW-0694">RNA-binding</keyword>
<keyword id="KW-0346">Stress response</keyword>
<reference key="1">
    <citation type="journal article" date="2005" name="Proc. Natl. Acad. Sci. U.S.A.">
        <title>Complete genome sequence of Vibrio fischeri: a symbiotic bacterium with pathogenic congeners.</title>
        <authorList>
            <person name="Ruby E.G."/>
            <person name="Urbanowski M."/>
            <person name="Campbell J."/>
            <person name="Dunn A."/>
            <person name="Faini M."/>
            <person name="Gunsalus R."/>
            <person name="Lostroh P."/>
            <person name="Lupp C."/>
            <person name="McCann J."/>
            <person name="Millikan D."/>
            <person name="Schaefer A."/>
            <person name="Stabb E."/>
            <person name="Stevens A."/>
            <person name="Visick K."/>
            <person name="Whistler C."/>
            <person name="Greenberg E.P."/>
        </authorList>
    </citation>
    <scope>NUCLEOTIDE SEQUENCE [LARGE SCALE GENOMIC DNA]</scope>
    <source>
        <strain>ATCC 700601 / ES114</strain>
    </source>
</reference>
<evidence type="ECO:0000255" key="1">
    <source>
        <dbReference type="HAMAP-Rule" id="MF_00436"/>
    </source>
</evidence>
<evidence type="ECO:0000255" key="2">
    <source>
        <dbReference type="PROSITE-ProRule" id="PRU01346"/>
    </source>
</evidence>
<evidence type="ECO:0000256" key="3">
    <source>
        <dbReference type="SAM" id="MobiDB-lite"/>
    </source>
</evidence>
<dbReference type="EMBL" id="CP000020">
    <property type="protein sequence ID" value="AAW86818.1"/>
    <property type="molecule type" value="Genomic_DNA"/>
</dbReference>
<dbReference type="RefSeq" id="WP_011262725.1">
    <property type="nucleotide sequence ID" value="NZ_CAWLES010000001.1"/>
</dbReference>
<dbReference type="RefSeq" id="YP_205706.1">
    <property type="nucleotide sequence ID" value="NC_006840.2"/>
</dbReference>
<dbReference type="SMR" id="Q5E2C8"/>
<dbReference type="STRING" id="312309.VF_2323"/>
<dbReference type="EnsemblBacteria" id="AAW86818">
    <property type="protein sequence ID" value="AAW86818"/>
    <property type="gene ID" value="VF_2323"/>
</dbReference>
<dbReference type="GeneID" id="54165039"/>
<dbReference type="KEGG" id="vfi:VF_2323"/>
<dbReference type="PATRIC" id="fig|312309.11.peg.2362"/>
<dbReference type="eggNOG" id="COG1923">
    <property type="taxonomic scope" value="Bacteria"/>
</dbReference>
<dbReference type="HOGENOM" id="CLU_113688_2_2_6"/>
<dbReference type="OrthoDB" id="9799751at2"/>
<dbReference type="Proteomes" id="UP000000537">
    <property type="component" value="Chromosome I"/>
</dbReference>
<dbReference type="GO" id="GO:0005829">
    <property type="term" value="C:cytosol"/>
    <property type="evidence" value="ECO:0007669"/>
    <property type="project" value="TreeGrafter"/>
</dbReference>
<dbReference type="GO" id="GO:0003723">
    <property type="term" value="F:RNA binding"/>
    <property type="evidence" value="ECO:0007669"/>
    <property type="project" value="UniProtKB-UniRule"/>
</dbReference>
<dbReference type="GO" id="GO:0006355">
    <property type="term" value="P:regulation of DNA-templated transcription"/>
    <property type="evidence" value="ECO:0007669"/>
    <property type="project" value="InterPro"/>
</dbReference>
<dbReference type="GO" id="GO:0043487">
    <property type="term" value="P:regulation of RNA stability"/>
    <property type="evidence" value="ECO:0007669"/>
    <property type="project" value="TreeGrafter"/>
</dbReference>
<dbReference type="GO" id="GO:0045974">
    <property type="term" value="P:regulation of translation, ncRNA-mediated"/>
    <property type="evidence" value="ECO:0007669"/>
    <property type="project" value="TreeGrafter"/>
</dbReference>
<dbReference type="CDD" id="cd01716">
    <property type="entry name" value="Hfq"/>
    <property type="match status" value="1"/>
</dbReference>
<dbReference type="FunFam" id="2.30.30.100:FF:000001">
    <property type="entry name" value="RNA-binding protein Hfq"/>
    <property type="match status" value="1"/>
</dbReference>
<dbReference type="Gene3D" id="2.30.30.100">
    <property type="match status" value="1"/>
</dbReference>
<dbReference type="HAMAP" id="MF_00436">
    <property type="entry name" value="Hfq"/>
    <property type="match status" value="1"/>
</dbReference>
<dbReference type="InterPro" id="IPR005001">
    <property type="entry name" value="Hfq"/>
</dbReference>
<dbReference type="InterPro" id="IPR010920">
    <property type="entry name" value="LSM_dom_sf"/>
</dbReference>
<dbReference type="InterPro" id="IPR047575">
    <property type="entry name" value="Sm"/>
</dbReference>
<dbReference type="NCBIfam" id="TIGR02383">
    <property type="entry name" value="Hfq"/>
    <property type="match status" value="1"/>
</dbReference>
<dbReference type="NCBIfam" id="NF001602">
    <property type="entry name" value="PRK00395.1"/>
    <property type="match status" value="1"/>
</dbReference>
<dbReference type="PANTHER" id="PTHR34772">
    <property type="entry name" value="RNA-BINDING PROTEIN HFQ"/>
    <property type="match status" value="1"/>
</dbReference>
<dbReference type="PANTHER" id="PTHR34772:SF1">
    <property type="entry name" value="RNA-BINDING PROTEIN HFQ"/>
    <property type="match status" value="1"/>
</dbReference>
<dbReference type="Pfam" id="PF17209">
    <property type="entry name" value="Hfq"/>
    <property type="match status" value="1"/>
</dbReference>
<dbReference type="SUPFAM" id="SSF50182">
    <property type="entry name" value="Sm-like ribonucleoproteins"/>
    <property type="match status" value="1"/>
</dbReference>
<dbReference type="PROSITE" id="PS52002">
    <property type="entry name" value="SM"/>
    <property type="match status" value="1"/>
</dbReference>
<comment type="function">
    <text evidence="1">RNA chaperone that binds small regulatory RNA (sRNAs) and mRNAs to facilitate mRNA translational regulation in response to envelope stress, environmental stress and changes in metabolite concentrations. Also binds with high specificity to tRNAs.</text>
</comment>
<comment type="subunit">
    <text evidence="1">Homohexamer.</text>
</comment>
<comment type="similarity">
    <text evidence="1">Belongs to the Hfq family.</text>
</comment>
<name>HFQ_ALIF1</name>
<gene>
    <name evidence="1" type="primary">hfq</name>
    <name type="ordered locus">VF_2323</name>
</gene>
<sequence>MAKGQSLQDPFLNALRRERIPVSIYLVNGIKLQGQIESFDQFVILLKNTVNQMVYKHAISTVVPARAVSHHSASDRPQGERPQEKTEE</sequence>
<accession>Q5E2C8</accession>
<organism>
    <name type="scientific">Aliivibrio fischeri (strain ATCC 700601 / ES114)</name>
    <name type="common">Vibrio fischeri</name>
    <dbReference type="NCBI Taxonomy" id="312309"/>
    <lineage>
        <taxon>Bacteria</taxon>
        <taxon>Pseudomonadati</taxon>
        <taxon>Pseudomonadota</taxon>
        <taxon>Gammaproteobacteria</taxon>
        <taxon>Vibrionales</taxon>
        <taxon>Vibrionaceae</taxon>
        <taxon>Aliivibrio</taxon>
    </lineage>
</organism>
<feature type="chain" id="PRO_0000265200" description="RNA-binding protein Hfq">
    <location>
        <begin position="1"/>
        <end position="88"/>
    </location>
</feature>
<feature type="domain" description="Sm" evidence="2">
    <location>
        <begin position="9"/>
        <end position="68"/>
    </location>
</feature>
<feature type="region of interest" description="Disordered" evidence="3">
    <location>
        <begin position="66"/>
        <end position="88"/>
    </location>
</feature>
<feature type="compositionally biased region" description="Basic and acidic residues" evidence="3">
    <location>
        <begin position="72"/>
        <end position="88"/>
    </location>
</feature>